<sequence>MATLQQQKIRIRLQAFDRRLLDTSCEKIVDTANRTNATAIGPIPLPTKRKIYCVLRSPHVDKDSREHFETRTHRRIIDIYQPSSKTIDALMKLDLPSGVDIEVKL</sequence>
<accession>Q3MDM6</accession>
<dbReference type="EMBL" id="CP000117">
    <property type="protein sequence ID" value="ABA20910.1"/>
    <property type="molecule type" value="Genomic_DNA"/>
</dbReference>
<dbReference type="RefSeq" id="WP_010998474.1">
    <property type="nucleotide sequence ID" value="NC_007413.1"/>
</dbReference>
<dbReference type="SMR" id="Q3MDM6"/>
<dbReference type="STRING" id="240292.Ava_1286"/>
<dbReference type="GeneID" id="58723954"/>
<dbReference type="KEGG" id="ava:Ava_1286"/>
<dbReference type="eggNOG" id="COG0051">
    <property type="taxonomic scope" value="Bacteria"/>
</dbReference>
<dbReference type="HOGENOM" id="CLU_122625_1_3_3"/>
<dbReference type="Proteomes" id="UP000002533">
    <property type="component" value="Chromosome"/>
</dbReference>
<dbReference type="GO" id="GO:1990904">
    <property type="term" value="C:ribonucleoprotein complex"/>
    <property type="evidence" value="ECO:0007669"/>
    <property type="project" value="UniProtKB-KW"/>
</dbReference>
<dbReference type="GO" id="GO:0005840">
    <property type="term" value="C:ribosome"/>
    <property type="evidence" value="ECO:0007669"/>
    <property type="project" value="UniProtKB-KW"/>
</dbReference>
<dbReference type="GO" id="GO:0003735">
    <property type="term" value="F:structural constituent of ribosome"/>
    <property type="evidence" value="ECO:0007669"/>
    <property type="project" value="InterPro"/>
</dbReference>
<dbReference type="GO" id="GO:0000049">
    <property type="term" value="F:tRNA binding"/>
    <property type="evidence" value="ECO:0007669"/>
    <property type="project" value="UniProtKB-UniRule"/>
</dbReference>
<dbReference type="GO" id="GO:0006412">
    <property type="term" value="P:translation"/>
    <property type="evidence" value="ECO:0007669"/>
    <property type="project" value="UniProtKB-UniRule"/>
</dbReference>
<dbReference type="FunFam" id="3.30.70.600:FF:000001">
    <property type="entry name" value="30S ribosomal protein S10"/>
    <property type="match status" value="1"/>
</dbReference>
<dbReference type="Gene3D" id="3.30.70.600">
    <property type="entry name" value="Ribosomal protein S10 domain"/>
    <property type="match status" value="1"/>
</dbReference>
<dbReference type="HAMAP" id="MF_00508">
    <property type="entry name" value="Ribosomal_uS10"/>
    <property type="match status" value="1"/>
</dbReference>
<dbReference type="InterPro" id="IPR001848">
    <property type="entry name" value="Ribosomal_uS10"/>
</dbReference>
<dbReference type="InterPro" id="IPR018268">
    <property type="entry name" value="Ribosomal_uS10_CS"/>
</dbReference>
<dbReference type="InterPro" id="IPR027486">
    <property type="entry name" value="Ribosomal_uS10_dom"/>
</dbReference>
<dbReference type="InterPro" id="IPR036838">
    <property type="entry name" value="Ribosomal_uS10_dom_sf"/>
</dbReference>
<dbReference type="NCBIfam" id="NF001861">
    <property type="entry name" value="PRK00596.1"/>
    <property type="match status" value="1"/>
</dbReference>
<dbReference type="NCBIfam" id="TIGR01049">
    <property type="entry name" value="rpsJ_bact"/>
    <property type="match status" value="1"/>
</dbReference>
<dbReference type="PANTHER" id="PTHR11700">
    <property type="entry name" value="30S RIBOSOMAL PROTEIN S10 FAMILY MEMBER"/>
    <property type="match status" value="1"/>
</dbReference>
<dbReference type="Pfam" id="PF00338">
    <property type="entry name" value="Ribosomal_S10"/>
    <property type="match status" value="1"/>
</dbReference>
<dbReference type="PRINTS" id="PR00971">
    <property type="entry name" value="RIBOSOMALS10"/>
</dbReference>
<dbReference type="SMART" id="SM01403">
    <property type="entry name" value="Ribosomal_S10"/>
    <property type="match status" value="1"/>
</dbReference>
<dbReference type="SUPFAM" id="SSF54999">
    <property type="entry name" value="Ribosomal protein S10"/>
    <property type="match status" value="1"/>
</dbReference>
<dbReference type="PROSITE" id="PS00361">
    <property type="entry name" value="RIBOSOMAL_S10"/>
    <property type="match status" value="1"/>
</dbReference>
<proteinExistence type="inferred from homology"/>
<protein>
    <recommendedName>
        <fullName evidence="1">Small ribosomal subunit protein uS10</fullName>
    </recommendedName>
    <alternativeName>
        <fullName evidence="2">30S ribosomal protein S10</fullName>
    </alternativeName>
</protein>
<evidence type="ECO:0000255" key="1">
    <source>
        <dbReference type="HAMAP-Rule" id="MF_00508"/>
    </source>
</evidence>
<evidence type="ECO:0000305" key="2"/>
<name>RS10_TRIV2</name>
<comment type="function">
    <text evidence="1">Involved in the binding of tRNA to the ribosomes.</text>
</comment>
<comment type="subunit">
    <text evidence="1">Part of the 30S ribosomal subunit.</text>
</comment>
<comment type="similarity">
    <text evidence="1">Belongs to the universal ribosomal protein uS10 family.</text>
</comment>
<reference key="1">
    <citation type="journal article" date="2014" name="Stand. Genomic Sci.">
        <title>Complete genome sequence of Anabaena variabilis ATCC 29413.</title>
        <authorList>
            <person name="Thiel T."/>
            <person name="Pratte B.S."/>
            <person name="Zhong J."/>
            <person name="Goodwin L."/>
            <person name="Copeland A."/>
            <person name="Lucas S."/>
            <person name="Han C."/>
            <person name="Pitluck S."/>
            <person name="Land M.L."/>
            <person name="Kyrpides N.C."/>
            <person name="Woyke T."/>
        </authorList>
    </citation>
    <scope>NUCLEOTIDE SEQUENCE [LARGE SCALE GENOMIC DNA]</scope>
    <source>
        <strain>ATCC 29413 / PCC 7937</strain>
    </source>
</reference>
<feature type="chain" id="PRO_0000237007" description="Small ribosomal subunit protein uS10">
    <location>
        <begin position="1"/>
        <end position="105"/>
    </location>
</feature>
<keyword id="KW-0687">Ribonucleoprotein</keyword>
<keyword id="KW-0689">Ribosomal protein</keyword>
<organism>
    <name type="scientific">Trichormus variabilis (strain ATCC 29413 / PCC 7937)</name>
    <name type="common">Anabaena variabilis</name>
    <dbReference type="NCBI Taxonomy" id="240292"/>
    <lineage>
        <taxon>Bacteria</taxon>
        <taxon>Bacillati</taxon>
        <taxon>Cyanobacteriota</taxon>
        <taxon>Cyanophyceae</taxon>
        <taxon>Nostocales</taxon>
        <taxon>Nostocaceae</taxon>
        <taxon>Trichormus</taxon>
    </lineage>
</organism>
<gene>
    <name evidence="1" type="primary">rpsJ</name>
    <name evidence="1" type="synonym">rps10</name>
    <name type="ordered locus">Ava_1286</name>
</gene>